<reference key="1">
    <citation type="journal article" date="2008" name="J. Bacteriol.">
        <title>The complete genome sequence of Escherichia coli DH10B: insights into the biology of a laboratory workhorse.</title>
        <authorList>
            <person name="Durfee T."/>
            <person name="Nelson R."/>
            <person name="Baldwin S."/>
            <person name="Plunkett G. III"/>
            <person name="Burland V."/>
            <person name="Mau B."/>
            <person name="Petrosino J.F."/>
            <person name="Qin X."/>
            <person name="Muzny D.M."/>
            <person name="Ayele M."/>
            <person name="Gibbs R.A."/>
            <person name="Csorgo B."/>
            <person name="Posfai G."/>
            <person name="Weinstock G.M."/>
            <person name="Blattner F.R."/>
        </authorList>
    </citation>
    <scope>NUCLEOTIDE SEQUENCE [LARGE SCALE GENOMIC DNA]</scope>
    <source>
        <strain>K12 / DH10B</strain>
    </source>
</reference>
<comment type="subcellular location">
    <subcellularLocation>
        <location evidence="1">Cell inner membrane</location>
        <topology evidence="1">Multi-pass membrane protein</topology>
    </subcellularLocation>
</comment>
<comment type="similarity">
    <text evidence="1">Belongs to the UPF0761 family.</text>
</comment>
<name>YIHY_ECODH</name>
<dbReference type="EMBL" id="CP000948">
    <property type="protein sequence ID" value="ACB04900.1"/>
    <property type="molecule type" value="Genomic_DNA"/>
</dbReference>
<dbReference type="RefSeq" id="WP_000920762.1">
    <property type="nucleotide sequence ID" value="NC_010473.1"/>
</dbReference>
<dbReference type="KEGG" id="ecd:ECDH10B_4076"/>
<dbReference type="HOGENOM" id="CLU_032288_0_0_6"/>
<dbReference type="GO" id="GO:0005886">
    <property type="term" value="C:plasma membrane"/>
    <property type="evidence" value="ECO:0007669"/>
    <property type="project" value="UniProtKB-SubCell"/>
</dbReference>
<dbReference type="HAMAP" id="MF_00672">
    <property type="entry name" value="UPF0761"/>
    <property type="match status" value="1"/>
</dbReference>
<dbReference type="InterPro" id="IPR023679">
    <property type="entry name" value="UPF0761_bac"/>
</dbReference>
<dbReference type="InterPro" id="IPR017039">
    <property type="entry name" value="Virul_fac_BrkB"/>
</dbReference>
<dbReference type="NCBIfam" id="NF002457">
    <property type="entry name" value="PRK01637.1"/>
    <property type="match status" value="1"/>
</dbReference>
<dbReference type="NCBIfam" id="TIGR00765">
    <property type="entry name" value="yihY_not_rbn"/>
    <property type="match status" value="1"/>
</dbReference>
<dbReference type="PANTHER" id="PTHR30213">
    <property type="entry name" value="INNER MEMBRANE PROTEIN YHJD"/>
    <property type="match status" value="1"/>
</dbReference>
<dbReference type="PANTHER" id="PTHR30213:SF0">
    <property type="entry name" value="UPF0761 MEMBRANE PROTEIN YIHY"/>
    <property type="match status" value="1"/>
</dbReference>
<dbReference type="Pfam" id="PF03631">
    <property type="entry name" value="Virul_fac_BrkB"/>
    <property type="match status" value="1"/>
</dbReference>
<dbReference type="PIRSF" id="PIRSF035875">
    <property type="entry name" value="RNase_BN"/>
    <property type="match status" value="1"/>
</dbReference>
<keyword id="KW-0997">Cell inner membrane</keyword>
<keyword id="KW-1003">Cell membrane</keyword>
<keyword id="KW-0472">Membrane</keyword>
<keyword id="KW-0812">Transmembrane</keyword>
<keyword id="KW-1133">Transmembrane helix</keyword>
<feature type="chain" id="PRO_1000131550" description="UPF0761 membrane protein YihY">
    <location>
        <begin position="1"/>
        <end position="290"/>
    </location>
</feature>
<feature type="transmembrane region" description="Helical" evidence="1">
    <location>
        <begin position="44"/>
        <end position="64"/>
    </location>
</feature>
<feature type="transmembrane region" description="Helical" evidence="1">
    <location>
        <begin position="104"/>
        <end position="124"/>
    </location>
</feature>
<feature type="transmembrane region" description="Helical" evidence="1">
    <location>
        <begin position="140"/>
        <end position="160"/>
    </location>
</feature>
<feature type="transmembrane region" description="Helical" evidence="1">
    <location>
        <begin position="183"/>
        <end position="203"/>
    </location>
</feature>
<feature type="transmembrane region" description="Helical" evidence="1">
    <location>
        <begin position="210"/>
        <end position="230"/>
    </location>
</feature>
<feature type="transmembrane region" description="Helical" evidence="1">
    <location>
        <begin position="244"/>
        <end position="264"/>
    </location>
</feature>
<organism>
    <name type="scientific">Escherichia coli (strain K12 / DH10B)</name>
    <dbReference type="NCBI Taxonomy" id="316385"/>
    <lineage>
        <taxon>Bacteria</taxon>
        <taxon>Pseudomonadati</taxon>
        <taxon>Pseudomonadota</taxon>
        <taxon>Gammaproteobacteria</taxon>
        <taxon>Enterobacterales</taxon>
        <taxon>Enterobacteriaceae</taxon>
        <taxon>Escherichia</taxon>
    </lineage>
</organism>
<sequence length="290" mass="32839">MLKTIQDKARHRTRPLWAWLKLLWQRIDEDNMTTLAGNLAYVSLLSLVPLVAVVFALFAAFPMFSDVSIQLRHFIFANFLPATGDVIQRYIEQFVANSNKMTAVGACGLIVTALLLMYSIDSALNTIWRSKRARPKIYSFAVYWMILTLGPLLAGASLAISSYLLSLRWASDLNTVIDNVLRIFPLLLSWISFWLLYSIVPTIRVPNRDAIVGAFVAALLFEAGKKGFALYITMFPSYQLIYGVLAVIPILFVWVYWTWCIVLLGAEITVTLGEYRKLKQAAEQEEDDEP</sequence>
<gene>
    <name evidence="1" type="primary">yihY</name>
    <name type="ordered locus">ECDH10B_4076</name>
</gene>
<protein>
    <recommendedName>
        <fullName evidence="1">UPF0761 membrane protein YihY</fullName>
    </recommendedName>
</protein>
<accession>B1XB54</accession>
<evidence type="ECO:0000255" key="1">
    <source>
        <dbReference type="HAMAP-Rule" id="MF_00672"/>
    </source>
</evidence>
<proteinExistence type="inferred from homology"/>